<sequence length="361" mass="41523">MDKVMAQLESLVAHYEELQEMMADPEVINDTKRYMEISKEEADLREVVQKYKKYKENKKEIEDNKEIISNETDSDLIEMAKEENAELEKEIPELEDQIKILMLPKDPNDDKDIIMEIRGAAGGDEASLFAGDLLRMYEKYAERQNWNVSMIDSEPTEVGGYKRVAIMITGDKVYSKLKYENGAHRVQRIPVTESQGRVHTSTATVAVMPEYEQVDIDIDPKDIRVDVYRSSGAGGQHINKTSSAVRMTHLPTGIVVAMQDQRSQQQNREKAMQILKSRVYDYYESQNQAQYDAKRKNAVGTGDRSERIRTYNYPQNRVTDHRIGLTLNKLDRVMNGELDEIIDALILYNQTKQLEELADNA</sequence>
<gene>
    <name evidence="1" type="primary">prfA</name>
    <name type="ordered locus">LBA0767</name>
</gene>
<reference key="1">
    <citation type="journal article" date="2005" name="Proc. Natl. Acad. Sci. U.S.A.">
        <title>Complete genome sequence of the probiotic lactic acid bacterium Lactobacillus acidophilus NCFM.</title>
        <authorList>
            <person name="Altermann E."/>
            <person name="Russell W.M."/>
            <person name="Azcarate-Peril M.A."/>
            <person name="Barrangou R."/>
            <person name="Buck B.L."/>
            <person name="McAuliffe O."/>
            <person name="Souther N."/>
            <person name="Dobson A."/>
            <person name="Duong T."/>
            <person name="Callanan M."/>
            <person name="Lick S."/>
            <person name="Hamrick A."/>
            <person name="Cano R."/>
            <person name="Klaenhammer T.R."/>
        </authorList>
    </citation>
    <scope>NUCLEOTIDE SEQUENCE [LARGE SCALE GENOMIC DNA]</scope>
    <source>
        <strain>ATCC 700396 / NCK56 / N2 / NCFM</strain>
    </source>
</reference>
<feature type="chain" id="PRO_0000263288" description="Peptide chain release factor 1">
    <location>
        <begin position="1"/>
        <end position="361"/>
    </location>
</feature>
<feature type="modified residue" description="N5-methylglutamine" evidence="1">
    <location>
        <position position="236"/>
    </location>
</feature>
<evidence type="ECO:0000255" key="1">
    <source>
        <dbReference type="HAMAP-Rule" id="MF_00093"/>
    </source>
</evidence>
<organism>
    <name type="scientific">Lactobacillus acidophilus (strain ATCC 700396 / NCK56 / N2 / NCFM)</name>
    <dbReference type="NCBI Taxonomy" id="272621"/>
    <lineage>
        <taxon>Bacteria</taxon>
        <taxon>Bacillati</taxon>
        <taxon>Bacillota</taxon>
        <taxon>Bacilli</taxon>
        <taxon>Lactobacillales</taxon>
        <taxon>Lactobacillaceae</taxon>
        <taxon>Lactobacillus</taxon>
    </lineage>
</organism>
<comment type="function">
    <text evidence="1">Peptide chain release factor 1 directs the termination of translation in response to the peptide chain termination codons UAG and UAA.</text>
</comment>
<comment type="subcellular location">
    <subcellularLocation>
        <location evidence="1">Cytoplasm</location>
    </subcellularLocation>
</comment>
<comment type="PTM">
    <text evidence="1">Methylated by PrmC. Methylation increases the termination efficiency of RF1.</text>
</comment>
<comment type="similarity">
    <text evidence="1">Belongs to the prokaryotic/mitochondrial release factor family.</text>
</comment>
<name>RF1_LACAC</name>
<proteinExistence type="inferred from homology"/>
<keyword id="KW-0963">Cytoplasm</keyword>
<keyword id="KW-0488">Methylation</keyword>
<keyword id="KW-0648">Protein biosynthesis</keyword>
<keyword id="KW-1185">Reference proteome</keyword>
<protein>
    <recommendedName>
        <fullName evidence="1">Peptide chain release factor 1</fullName>
        <shortName evidence="1">RF-1</shortName>
    </recommendedName>
</protein>
<dbReference type="EMBL" id="CP000033">
    <property type="protein sequence ID" value="AAV42634.1"/>
    <property type="molecule type" value="Genomic_DNA"/>
</dbReference>
<dbReference type="RefSeq" id="WP_003546735.1">
    <property type="nucleotide sequence ID" value="NC_006814.3"/>
</dbReference>
<dbReference type="RefSeq" id="YP_193665.1">
    <property type="nucleotide sequence ID" value="NC_006814.3"/>
</dbReference>
<dbReference type="SMR" id="Q5FKZ0"/>
<dbReference type="STRING" id="272621.LBA0767"/>
<dbReference type="GeneID" id="93290110"/>
<dbReference type="KEGG" id="lac:LBA0767"/>
<dbReference type="PATRIC" id="fig|272621.13.peg.730"/>
<dbReference type="eggNOG" id="COG0216">
    <property type="taxonomic scope" value="Bacteria"/>
</dbReference>
<dbReference type="HOGENOM" id="CLU_036856_0_1_9"/>
<dbReference type="OrthoDB" id="9806673at2"/>
<dbReference type="BioCyc" id="LACI272621:G1G49-784-MONOMER"/>
<dbReference type="Proteomes" id="UP000006381">
    <property type="component" value="Chromosome"/>
</dbReference>
<dbReference type="GO" id="GO:0005737">
    <property type="term" value="C:cytoplasm"/>
    <property type="evidence" value="ECO:0007669"/>
    <property type="project" value="UniProtKB-SubCell"/>
</dbReference>
<dbReference type="GO" id="GO:0016149">
    <property type="term" value="F:translation release factor activity, codon specific"/>
    <property type="evidence" value="ECO:0007669"/>
    <property type="project" value="UniProtKB-UniRule"/>
</dbReference>
<dbReference type="FunFam" id="3.30.160.20:FF:000004">
    <property type="entry name" value="Peptide chain release factor 1"/>
    <property type="match status" value="1"/>
</dbReference>
<dbReference type="FunFam" id="3.30.70.1660:FF:000002">
    <property type="entry name" value="Peptide chain release factor 1"/>
    <property type="match status" value="1"/>
</dbReference>
<dbReference type="FunFam" id="3.30.70.1660:FF:000004">
    <property type="entry name" value="Peptide chain release factor 1"/>
    <property type="match status" value="1"/>
</dbReference>
<dbReference type="Gene3D" id="3.30.160.20">
    <property type="match status" value="1"/>
</dbReference>
<dbReference type="Gene3D" id="3.30.70.1660">
    <property type="match status" value="1"/>
</dbReference>
<dbReference type="Gene3D" id="6.10.140.1950">
    <property type="match status" value="1"/>
</dbReference>
<dbReference type="HAMAP" id="MF_00093">
    <property type="entry name" value="Rel_fac_1"/>
    <property type="match status" value="1"/>
</dbReference>
<dbReference type="InterPro" id="IPR005139">
    <property type="entry name" value="PCRF"/>
</dbReference>
<dbReference type="InterPro" id="IPR000352">
    <property type="entry name" value="Pep_chain_release_fac_I"/>
</dbReference>
<dbReference type="InterPro" id="IPR045853">
    <property type="entry name" value="Pep_chain_release_fac_I_sf"/>
</dbReference>
<dbReference type="InterPro" id="IPR050057">
    <property type="entry name" value="Prokaryotic/Mito_RF"/>
</dbReference>
<dbReference type="InterPro" id="IPR004373">
    <property type="entry name" value="RF-1"/>
</dbReference>
<dbReference type="NCBIfam" id="TIGR00019">
    <property type="entry name" value="prfA"/>
    <property type="match status" value="1"/>
</dbReference>
<dbReference type="NCBIfam" id="NF001859">
    <property type="entry name" value="PRK00591.1"/>
    <property type="match status" value="1"/>
</dbReference>
<dbReference type="PANTHER" id="PTHR43804">
    <property type="entry name" value="LD18447P"/>
    <property type="match status" value="1"/>
</dbReference>
<dbReference type="PANTHER" id="PTHR43804:SF7">
    <property type="entry name" value="LD18447P"/>
    <property type="match status" value="1"/>
</dbReference>
<dbReference type="Pfam" id="PF03462">
    <property type="entry name" value="PCRF"/>
    <property type="match status" value="1"/>
</dbReference>
<dbReference type="Pfam" id="PF00472">
    <property type="entry name" value="RF-1"/>
    <property type="match status" value="1"/>
</dbReference>
<dbReference type="SMART" id="SM00937">
    <property type="entry name" value="PCRF"/>
    <property type="match status" value="1"/>
</dbReference>
<dbReference type="SUPFAM" id="SSF75620">
    <property type="entry name" value="Release factor"/>
    <property type="match status" value="1"/>
</dbReference>
<dbReference type="PROSITE" id="PS00745">
    <property type="entry name" value="RF_PROK_I"/>
    <property type="match status" value="1"/>
</dbReference>
<accession>Q5FKZ0</accession>